<evidence type="ECO:0000250" key="1">
    <source>
        <dbReference type="UniProtKB" id="Q9ULG6"/>
    </source>
</evidence>
<evidence type="ECO:0000255" key="2"/>
<evidence type="ECO:0000256" key="3">
    <source>
        <dbReference type="SAM" id="MobiDB-lite"/>
    </source>
</evidence>
<evidence type="ECO:0000269" key="4">
    <source>
    </source>
</evidence>
<evidence type="ECO:0000303" key="5">
    <source>
    </source>
</evidence>
<evidence type="ECO:0000303" key="6">
    <source>
    </source>
</evidence>
<evidence type="ECO:0000305" key="7"/>
<organism>
    <name type="scientific">Mus musculus</name>
    <name type="common">Mouse</name>
    <dbReference type="NCBI Taxonomy" id="10090"/>
    <lineage>
        <taxon>Eukaryota</taxon>
        <taxon>Metazoa</taxon>
        <taxon>Chordata</taxon>
        <taxon>Craniata</taxon>
        <taxon>Vertebrata</taxon>
        <taxon>Euteleostomi</taxon>
        <taxon>Mammalia</taxon>
        <taxon>Eutheria</taxon>
        <taxon>Euarchontoglires</taxon>
        <taxon>Glires</taxon>
        <taxon>Rodentia</taxon>
        <taxon>Myomorpha</taxon>
        <taxon>Muroidea</taxon>
        <taxon>Muridae</taxon>
        <taxon>Murinae</taxon>
        <taxon>Mus</taxon>
        <taxon>Mus</taxon>
    </lineage>
</organism>
<name>CCPG1_MOUSE</name>
<dbReference type="EMBL" id="AK076325">
    <property type="protein sequence ID" value="BAC36301.2"/>
    <property type="molecule type" value="mRNA"/>
</dbReference>
<dbReference type="EMBL" id="BC006717">
    <property type="protein sequence ID" value="AAH06717.1"/>
    <property type="status" value="ALT_INIT"/>
    <property type="molecule type" value="mRNA"/>
</dbReference>
<dbReference type="EMBL" id="BC043049">
    <property type="protein sequence ID" value="AAH43049.1"/>
    <property type="molecule type" value="mRNA"/>
</dbReference>
<dbReference type="EMBL" id="BC082602">
    <property type="protein sequence ID" value="AAH82602.1"/>
    <property type="molecule type" value="mRNA"/>
</dbReference>
<dbReference type="CCDS" id="CCDS23334.1">
    <molecule id="Q640L3-3"/>
</dbReference>
<dbReference type="CCDS" id="CCDS52855.1">
    <molecule id="Q640L3-1"/>
</dbReference>
<dbReference type="CCDS" id="CCDS72278.1">
    <molecule id="Q640L3-2"/>
</dbReference>
<dbReference type="RefSeq" id="NP_001107800.1">
    <molecule id="Q640L3-1"/>
    <property type="nucleotide sequence ID" value="NM_001114328.2"/>
</dbReference>
<dbReference type="RefSeq" id="NP_001273473.1">
    <molecule id="Q640L3-2"/>
    <property type="nucleotide sequence ID" value="NM_001286544.1"/>
</dbReference>
<dbReference type="RefSeq" id="NP_001273474.1">
    <property type="nucleotide sequence ID" value="NM_001286545.1"/>
</dbReference>
<dbReference type="RefSeq" id="NP_001273475.1">
    <property type="nucleotide sequence ID" value="NM_001286546.1"/>
</dbReference>
<dbReference type="RefSeq" id="NP_082457.3">
    <molecule id="Q640L3-3"/>
    <property type="nucleotide sequence ID" value="NM_028181.5"/>
</dbReference>
<dbReference type="SMR" id="Q640L3"/>
<dbReference type="BioGRID" id="215274">
    <property type="interactions" value="1"/>
</dbReference>
<dbReference type="FunCoup" id="Q640L3">
    <property type="interactions" value="1252"/>
</dbReference>
<dbReference type="IntAct" id="Q640L3">
    <property type="interactions" value="1"/>
</dbReference>
<dbReference type="STRING" id="10090.ENSMUSP00000082458"/>
<dbReference type="GlyGen" id="Q640L3">
    <property type="glycosylation" value="2 sites, 1 N-linked glycan (1 site), 1 O-linked glycan (1 site)"/>
</dbReference>
<dbReference type="iPTMnet" id="Q640L3"/>
<dbReference type="PhosphoSitePlus" id="Q640L3"/>
<dbReference type="PaxDb" id="10090-ENSMUSP00000122966"/>
<dbReference type="ProteomicsDB" id="279946">
    <molecule id="Q640L3-1"/>
</dbReference>
<dbReference type="ProteomicsDB" id="279947">
    <molecule id="Q640L3-2"/>
</dbReference>
<dbReference type="ProteomicsDB" id="279948">
    <molecule id="Q640L3-3"/>
</dbReference>
<dbReference type="Pumba" id="Q640L3"/>
<dbReference type="Antibodypedia" id="57643">
    <property type="antibodies" value="66 antibodies from 18 providers"/>
</dbReference>
<dbReference type="DNASU" id="72278"/>
<dbReference type="Ensembl" id="ENSMUST00000037977.15">
    <molecule id="Q640L3-3"/>
    <property type="protein sequence ID" value="ENSMUSP00000045669.8"/>
    <property type="gene ID" value="ENSMUSG00000034563.17"/>
</dbReference>
<dbReference type="Ensembl" id="ENSMUST00000085350.11">
    <molecule id="Q640L3-2"/>
    <property type="protein sequence ID" value="ENSMUSP00000082458.5"/>
    <property type="gene ID" value="ENSMUSG00000034563.17"/>
</dbReference>
<dbReference type="Ensembl" id="ENSMUST00000150826.9">
    <molecule id="Q640L3-1"/>
    <property type="protein sequence ID" value="ENSMUSP00000122966.2"/>
    <property type="gene ID" value="ENSMUSG00000034563.17"/>
</dbReference>
<dbReference type="GeneID" id="72278"/>
<dbReference type="KEGG" id="mmu:72278"/>
<dbReference type="UCSC" id="uc009qqm.3">
    <molecule id="Q640L3-1"/>
    <property type="organism name" value="mouse"/>
</dbReference>
<dbReference type="UCSC" id="uc009qqo.3">
    <molecule id="Q640L3-3"/>
    <property type="organism name" value="mouse"/>
</dbReference>
<dbReference type="UCSC" id="uc009qqp.3">
    <molecule id="Q640L3-2"/>
    <property type="organism name" value="mouse"/>
</dbReference>
<dbReference type="AGR" id="MGI:1196419"/>
<dbReference type="CTD" id="9236"/>
<dbReference type="MGI" id="MGI:1196419">
    <property type="gene designation" value="Ccpg1"/>
</dbReference>
<dbReference type="VEuPathDB" id="HostDB:ENSMUSG00000034563"/>
<dbReference type="eggNOG" id="ENOG502QWDZ">
    <property type="taxonomic scope" value="Eukaryota"/>
</dbReference>
<dbReference type="GeneTree" id="ENSGT00940000160497"/>
<dbReference type="HOGENOM" id="CLU_018722_0_0_1"/>
<dbReference type="InParanoid" id="Q640L3"/>
<dbReference type="OMA" id="LDAFHHW"/>
<dbReference type="PhylomeDB" id="Q640L3"/>
<dbReference type="TreeFam" id="TF333202"/>
<dbReference type="BioGRID-ORCS" id="72278">
    <property type="hits" value="5 hits in 78 CRISPR screens"/>
</dbReference>
<dbReference type="ChiTaRS" id="Ccpg1">
    <property type="organism name" value="mouse"/>
</dbReference>
<dbReference type="PRO" id="PR:Q640L3"/>
<dbReference type="Proteomes" id="UP000000589">
    <property type="component" value="Chromosome 9"/>
</dbReference>
<dbReference type="RNAct" id="Q640L3">
    <property type="molecule type" value="protein"/>
</dbReference>
<dbReference type="Bgee" id="ENSMUSG00000034563">
    <property type="expression patterns" value="Expressed in granulocyte and 255 other cell types or tissues"/>
</dbReference>
<dbReference type="ExpressionAtlas" id="Q640L3">
    <property type="expression patterns" value="baseline and differential"/>
</dbReference>
<dbReference type="GO" id="GO:0016020">
    <property type="term" value="C:membrane"/>
    <property type="evidence" value="ECO:0000314"/>
    <property type="project" value="MGI"/>
</dbReference>
<dbReference type="GO" id="GO:0045787">
    <property type="term" value="P:positive regulation of cell cycle"/>
    <property type="evidence" value="ECO:0007669"/>
    <property type="project" value="Ensembl"/>
</dbReference>
<dbReference type="GO" id="GO:0008284">
    <property type="term" value="P:positive regulation of cell population proliferation"/>
    <property type="evidence" value="ECO:0007669"/>
    <property type="project" value="Ensembl"/>
</dbReference>
<dbReference type="GO" id="GO:0045944">
    <property type="term" value="P:positive regulation of transcription by RNA polymerase II"/>
    <property type="evidence" value="ECO:0000316"/>
    <property type="project" value="MGI"/>
</dbReference>
<dbReference type="Gene3D" id="1.20.120.20">
    <property type="entry name" value="Apolipoprotein"/>
    <property type="match status" value="1"/>
</dbReference>
<dbReference type="InterPro" id="IPR051990">
    <property type="entry name" value="CCPG1/PBIP1"/>
</dbReference>
<dbReference type="PANTHER" id="PTHR28638">
    <property type="entry name" value="CELL CYCLE PROGRESSION PROTEIN 1"/>
    <property type="match status" value="1"/>
</dbReference>
<dbReference type="PANTHER" id="PTHR28638:SF2">
    <property type="entry name" value="CELL CYCLE PROGRESSION PROTEIN 1"/>
    <property type="match status" value="1"/>
</dbReference>
<feature type="chain" id="PRO_0000310539" description="Cell cycle progression protein 1">
    <location>
        <begin position="1"/>
        <end position="753"/>
    </location>
</feature>
<feature type="topological domain" description="Cytoplasmic" evidence="2">
    <location>
        <begin position="1"/>
        <end position="218"/>
    </location>
</feature>
<feature type="transmembrane region" description="Helical; Signal-anchor for type II membrane protein" evidence="2">
    <location>
        <begin position="219"/>
        <end position="239"/>
    </location>
</feature>
<feature type="topological domain" description="Lumenal" evidence="2">
    <location>
        <begin position="240"/>
        <end position="753"/>
    </location>
</feature>
<feature type="region of interest" description="Interaction with MCF2L and SRC" evidence="4">
    <location>
        <begin position="1"/>
        <end position="307"/>
    </location>
</feature>
<feature type="region of interest" description="Disordered" evidence="3">
    <location>
        <begin position="57"/>
        <end position="211"/>
    </location>
</feature>
<feature type="region of interest" description="Disordered" evidence="3">
    <location>
        <begin position="457"/>
        <end position="484"/>
    </location>
</feature>
<feature type="region of interest" description="Disordered" evidence="3">
    <location>
        <begin position="553"/>
        <end position="606"/>
    </location>
</feature>
<feature type="coiled-coil region" evidence="2">
    <location>
        <begin position="298"/>
        <end position="449"/>
    </location>
</feature>
<feature type="coiled-coil region" evidence="2">
    <location>
        <begin position="503"/>
        <end position="529"/>
    </location>
</feature>
<feature type="compositionally biased region" description="Polar residues" evidence="3">
    <location>
        <begin position="62"/>
        <end position="78"/>
    </location>
</feature>
<feature type="compositionally biased region" description="Polar residues" evidence="3">
    <location>
        <begin position="122"/>
        <end position="138"/>
    </location>
</feature>
<feature type="compositionally biased region" description="Basic residues" evidence="3">
    <location>
        <begin position="176"/>
        <end position="185"/>
    </location>
</feature>
<feature type="compositionally biased region" description="Acidic residues" evidence="3">
    <location>
        <begin position="190"/>
        <end position="201"/>
    </location>
</feature>
<feature type="compositionally biased region" description="Basic and acidic residues" evidence="3">
    <location>
        <begin position="457"/>
        <end position="467"/>
    </location>
</feature>
<feature type="compositionally biased region" description="Basic residues" evidence="3">
    <location>
        <begin position="468"/>
        <end position="478"/>
    </location>
</feature>
<feature type="compositionally biased region" description="Basic and acidic residues" evidence="3">
    <location>
        <begin position="553"/>
        <end position="563"/>
    </location>
</feature>
<feature type="compositionally biased region" description="Polar residues" evidence="3">
    <location>
        <begin position="573"/>
        <end position="584"/>
    </location>
</feature>
<feature type="compositionally biased region" description="Basic and acidic residues" evidence="3">
    <location>
        <begin position="591"/>
        <end position="605"/>
    </location>
</feature>
<feature type="modified residue" description="Phosphoserine" evidence="1">
    <location>
        <position position="187"/>
    </location>
</feature>
<feature type="splice variant" id="VSP_029317" description="In isoform 3." evidence="6">
    <original>GMFECAGQEAISPVNKASPVRMNDFKQLIHWYLLNELETFHHWKELDQFISPFFPNGVFRHDQQLFADFVDDVKGYLKSIKEYRVEDGNLEKLDGCIYRHFGHVFALPFGPRSVYIKPCYYNSF</original>
    <variation>VDLIKSNVW</variation>
    <location>
        <begin position="630"/>
        <end position="753"/>
    </location>
</feature>
<feature type="splice variant" id="VSP_029318" description="In isoform 2." evidence="5">
    <original>RSVYIKPCYYNSF</original>
    <variation>SRPDKKQRMVTIENARHRKQEQKHLHPQPYEREGKWQKYGRANGRHTANLELELGQLPFDPKY</variation>
    <location>
        <begin position="741"/>
        <end position="753"/>
    </location>
</feature>
<feature type="sequence conflict" description="In Ref. 1; BAC36301." evidence="7" ref="1">
    <original>S</original>
    <variation>C</variation>
    <location>
        <position position="156"/>
    </location>
</feature>
<feature type="sequence conflict" description="In Ref. 1; BAC36301." evidence="7" ref="1">
    <original>P</original>
    <variation>R</variation>
    <location>
        <position position="176"/>
    </location>
</feature>
<feature type="sequence conflict" description="In Ref. 2; AAH82602." evidence="7" ref="2">
    <original>A</original>
    <variation>S</variation>
    <location>
        <position position="227"/>
    </location>
</feature>
<feature type="sequence conflict" description="In Ref. 2; AAH82602." evidence="7" ref="2">
    <location>
        <position position="291"/>
    </location>
</feature>
<feature type="sequence conflict" description="In Ref. 2; AAH82602." evidence="7" ref="2">
    <original>P</original>
    <variation>S</variation>
    <location>
        <position position="684"/>
    </location>
</feature>
<proteinExistence type="evidence at protein level"/>
<protein>
    <recommendedName>
        <fullName>Cell cycle progression protein 1</fullName>
    </recommendedName>
</protein>
<accession>Q640L3</accession>
<accession>Q05BJ9</accession>
<accession>Q8C692</accession>
<accession>Q922W9</accession>
<comment type="function">
    <text evidence="4">Acts as an assembly platform for Rho protein signaling complexes. Limits guanine nucleotide exchange activity of MCF2L toward RHOA, which results in an inhibition of both its transcriptional activation ability and its transforming activity. Does not inhibit activity of MCF2L toward CDC42, or activity of MCF2 toward either RHOA or CDC42. May be involved in cell cycle regulation.</text>
</comment>
<comment type="subunit">
    <text evidence="4">Interacts with MCF2L. May interact with MCF2, ARHGEF1, BCR, VAV1 and FGD1, but not with TIAM1. Interacts with GTP-bound CDC42 and SRC.</text>
</comment>
<comment type="subcellular location">
    <subcellularLocation>
        <location evidence="4">Cytoplasmic granule membrane</location>
        <topology evidence="4">Single-pass type II membrane protein</topology>
    </subcellularLocation>
</comment>
<comment type="alternative products">
    <event type="alternative splicing"/>
    <isoform>
        <id>Q640L3-1</id>
        <name>1</name>
        <sequence type="displayed"/>
    </isoform>
    <isoform>
        <id>Q640L3-2</id>
        <name>2</name>
        <sequence type="described" ref="VSP_029318"/>
    </isoform>
    <isoform>
        <id>Q640L3-3</id>
        <name>3</name>
        <sequence type="described" ref="VSP_029317"/>
    </isoform>
</comment>
<comment type="similarity">
    <text evidence="7">Belongs to the CCPG1 family.</text>
</comment>
<comment type="sequence caution" evidence="7">
    <conflict type="erroneous initiation">
        <sequence resource="EMBL-CDS" id="AAH06717"/>
    </conflict>
</comment>
<reference key="1">
    <citation type="journal article" date="2005" name="Science">
        <title>The transcriptional landscape of the mammalian genome.</title>
        <authorList>
            <person name="Carninci P."/>
            <person name="Kasukawa T."/>
            <person name="Katayama S."/>
            <person name="Gough J."/>
            <person name="Frith M.C."/>
            <person name="Maeda N."/>
            <person name="Oyama R."/>
            <person name="Ravasi T."/>
            <person name="Lenhard B."/>
            <person name="Wells C."/>
            <person name="Kodzius R."/>
            <person name="Shimokawa K."/>
            <person name="Bajic V.B."/>
            <person name="Brenner S.E."/>
            <person name="Batalov S."/>
            <person name="Forrest A.R."/>
            <person name="Zavolan M."/>
            <person name="Davis M.J."/>
            <person name="Wilming L.G."/>
            <person name="Aidinis V."/>
            <person name="Allen J.E."/>
            <person name="Ambesi-Impiombato A."/>
            <person name="Apweiler R."/>
            <person name="Aturaliya R.N."/>
            <person name="Bailey T.L."/>
            <person name="Bansal M."/>
            <person name="Baxter L."/>
            <person name="Beisel K.W."/>
            <person name="Bersano T."/>
            <person name="Bono H."/>
            <person name="Chalk A.M."/>
            <person name="Chiu K.P."/>
            <person name="Choudhary V."/>
            <person name="Christoffels A."/>
            <person name="Clutterbuck D.R."/>
            <person name="Crowe M.L."/>
            <person name="Dalla E."/>
            <person name="Dalrymple B.P."/>
            <person name="de Bono B."/>
            <person name="Della Gatta G."/>
            <person name="di Bernardo D."/>
            <person name="Down T."/>
            <person name="Engstrom P."/>
            <person name="Fagiolini M."/>
            <person name="Faulkner G."/>
            <person name="Fletcher C.F."/>
            <person name="Fukushima T."/>
            <person name="Furuno M."/>
            <person name="Futaki S."/>
            <person name="Gariboldi M."/>
            <person name="Georgii-Hemming P."/>
            <person name="Gingeras T.R."/>
            <person name="Gojobori T."/>
            <person name="Green R.E."/>
            <person name="Gustincich S."/>
            <person name="Harbers M."/>
            <person name="Hayashi Y."/>
            <person name="Hensch T.K."/>
            <person name="Hirokawa N."/>
            <person name="Hill D."/>
            <person name="Huminiecki L."/>
            <person name="Iacono M."/>
            <person name="Ikeo K."/>
            <person name="Iwama A."/>
            <person name="Ishikawa T."/>
            <person name="Jakt M."/>
            <person name="Kanapin A."/>
            <person name="Katoh M."/>
            <person name="Kawasawa Y."/>
            <person name="Kelso J."/>
            <person name="Kitamura H."/>
            <person name="Kitano H."/>
            <person name="Kollias G."/>
            <person name="Krishnan S.P."/>
            <person name="Kruger A."/>
            <person name="Kummerfeld S.K."/>
            <person name="Kurochkin I.V."/>
            <person name="Lareau L.F."/>
            <person name="Lazarevic D."/>
            <person name="Lipovich L."/>
            <person name="Liu J."/>
            <person name="Liuni S."/>
            <person name="McWilliam S."/>
            <person name="Madan Babu M."/>
            <person name="Madera M."/>
            <person name="Marchionni L."/>
            <person name="Matsuda H."/>
            <person name="Matsuzawa S."/>
            <person name="Miki H."/>
            <person name="Mignone F."/>
            <person name="Miyake S."/>
            <person name="Morris K."/>
            <person name="Mottagui-Tabar S."/>
            <person name="Mulder N."/>
            <person name="Nakano N."/>
            <person name="Nakauchi H."/>
            <person name="Ng P."/>
            <person name="Nilsson R."/>
            <person name="Nishiguchi S."/>
            <person name="Nishikawa S."/>
            <person name="Nori F."/>
            <person name="Ohara O."/>
            <person name="Okazaki Y."/>
            <person name="Orlando V."/>
            <person name="Pang K.C."/>
            <person name="Pavan W.J."/>
            <person name="Pavesi G."/>
            <person name="Pesole G."/>
            <person name="Petrovsky N."/>
            <person name="Piazza S."/>
            <person name="Reed J."/>
            <person name="Reid J.F."/>
            <person name="Ring B.Z."/>
            <person name="Ringwald M."/>
            <person name="Rost B."/>
            <person name="Ruan Y."/>
            <person name="Salzberg S.L."/>
            <person name="Sandelin A."/>
            <person name="Schneider C."/>
            <person name="Schoenbach C."/>
            <person name="Sekiguchi K."/>
            <person name="Semple C.A."/>
            <person name="Seno S."/>
            <person name="Sessa L."/>
            <person name="Sheng Y."/>
            <person name="Shibata Y."/>
            <person name="Shimada H."/>
            <person name="Shimada K."/>
            <person name="Silva D."/>
            <person name="Sinclair B."/>
            <person name="Sperling S."/>
            <person name="Stupka E."/>
            <person name="Sugiura K."/>
            <person name="Sultana R."/>
            <person name="Takenaka Y."/>
            <person name="Taki K."/>
            <person name="Tammoja K."/>
            <person name="Tan S.L."/>
            <person name="Tang S."/>
            <person name="Taylor M.S."/>
            <person name="Tegner J."/>
            <person name="Teichmann S.A."/>
            <person name="Ueda H.R."/>
            <person name="van Nimwegen E."/>
            <person name="Verardo R."/>
            <person name="Wei C.L."/>
            <person name="Yagi K."/>
            <person name="Yamanishi H."/>
            <person name="Zabarovsky E."/>
            <person name="Zhu S."/>
            <person name="Zimmer A."/>
            <person name="Hide W."/>
            <person name="Bult C."/>
            <person name="Grimmond S.M."/>
            <person name="Teasdale R.D."/>
            <person name="Liu E.T."/>
            <person name="Brusic V."/>
            <person name="Quackenbush J."/>
            <person name="Wahlestedt C."/>
            <person name="Mattick J.S."/>
            <person name="Hume D.A."/>
            <person name="Kai C."/>
            <person name="Sasaki D."/>
            <person name="Tomaru Y."/>
            <person name="Fukuda S."/>
            <person name="Kanamori-Katayama M."/>
            <person name="Suzuki M."/>
            <person name="Aoki J."/>
            <person name="Arakawa T."/>
            <person name="Iida J."/>
            <person name="Imamura K."/>
            <person name="Itoh M."/>
            <person name="Kato T."/>
            <person name="Kawaji H."/>
            <person name="Kawagashira N."/>
            <person name="Kawashima T."/>
            <person name="Kojima M."/>
            <person name="Kondo S."/>
            <person name="Konno H."/>
            <person name="Nakano K."/>
            <person name="Ninomiya N."/>
            <person name="Nishio T."/>
            <person name="Okada M."/>
            <person name="Plessy C."/>
            <person name="Shibata K."/>
            <person name="Shiraki T."/>
            <person name="Suzuki S."/>
            <person name="Tagami M."/>
            <person name="Waki K."/>
            <person name="Watahiki A."/>
            <person name="Okamura-Oho Y."/>
            <person name="Suzuki H."/>
            <person name="Kawai J."/>
            <person name="Hayashizaki Y."/>
        </authorList>
    </citation>
    <scope>NUCLEOTIDE SEQUENCE [LARGE SCALE MRNA] (ISOFORM 3)</scope>
    <source>
        <strain>C57BL/6J</strain>
        <tissue>Skin</tissue>
    </source>
</reference>
<reference key="2">
    <citation type="journal article" date="2004" name="Genome Res.">
        <title>The status, quality, and expansion of the NIH full-length cDNA project: the Mammalian Gene Collection (MGC).</title>
        <authorList>
            <consortium name="The MGC Project Team"/>
        </authorList>
    </citation>
    <scope>NUCLEOTIDE SEQUENCE [LARGE SCALE MRNA] (ISOFORMS 1 AND 2)</scope>
    <source>
        <strain>C57BL/6J</strain>
        <strain>FVB/N</strain>
        <tissue>Brain</tissue>
        <tissue>Head</tissue>
        <tissue>Mammary tumor</tissue>
    </source>
</reference>
<reference key="3">
    <citation type="journal article" date="2006" name="Mol. Cell. Biol.">
        <title>Ccpg1, a novel scaffold protein that regulates the activity of the Rho guanine nucleotide exchange factor Dbs.</title>
        <authorList>
            <person name="Kostenko E.V."/>
            <person name="Olabisi O.O."/>
            <person name="Sahay S."/>
            <person name="Rodriguez P.L."/>
            <person name="Whitehead I.P."/>
        </authorList>
    </citation>
    <scope>INTERACTION WITH MCF2; MCF2L; ARHGEF1; BCR; VAV1; FGD1; CDC42 AND SRC</scope>
    <scope>SUBCELLULAR LOCATION</scope>
    <scope>FUNCTION</scope>
</reference>
<reference key="4">
    <citation type="journal article" date="2007" name="Proc. Natl. Acad. Sci. U.S.A.">
        <title>Large-scale phosphorylation analysis of mouse liver.</title>
        <authorList>
            <person name="Villen J."/>
            <person name="Beausoleil S.A."/>
            <person name="Gerber S.A."/>
            <person name="Gygi S.P."/>
        </authorList>
    </citation>
    <scope>IDENTIFICATION BY MASS SPECTROMETRY [LARGE SCALE ANALYSIS]</scope>
    <source>
        <tissue>Liver</tissue>
    </source>
</reference>
<reference key="5">
    <citation type="journal article" date="2010" name="Cell">
        <title>A tissue-specific atlas of mouse protein phosphorylation and expression.</title>
        <authorList>
            <person name="Huttlin E.L."/>
            <person name="Jedrychowski M.P."/>
            <person name="Elias J.E."/>
            <person name="Goswami T."/>
            <person name="Rad R."/>
            <person name="Beausoleil S.A."/>
            <person name="Villen J."/>
            <person name="Haas W."/>
            <person name="Sowa M.E."/>
            <person name="Gygi S.P."/>
        </authorList>
    </citation>
    <scope>IDENTIFICATION BY MASS SPECTROMETRY [LARGE SCALE ANALYSIS]</scope>
    <source>
        <tissue>Kidney</tissue>
        <tissue>Pancreas</tissue>
    </source>
</reference>
<sequence>MSESSSDSDSSCGWTVINHEGSDIEIVNSATASDNCGLTLECSLVEQEELPVLYVGHGGEESSANNTSSVGETMLSSMRETKSAAEVEEAPSPEDNVYFGTTSDDSDIVTLEPPKLEEMGNQEVTIQEAPSSDDLNMGSSSSSQYAFCQPEPVFSSQPSDEESSSDDTSHEPSPAPRRRRNRKKTVSISESEEPPLAEPEDEPSKEPSKRHFSRGLNKCVILALVIAVSMGFGHFYGTIQIQKQLVRKTHEDELDGVKGYLSQRKQEQESFLDFKSLKENLERCWTVTESEKITFETQKKNLAAENQYLRISLEKEEQALSSLQEELRQLREQIRLLEDKGTSTQLVRENQVLKQYLEVEKQKTDSFLREREMLLEEARMLKRDLEREQLTAMALRAELEQFIPGQAQSRAESPSVQTEEKEVGLLQQRLAELEQKLIFEQQRSDLWERLYVEAKDQHGKQETDGRKRGSRGSHRAKSKSKETFLGTVKETFDAMKNSTKEFVRHHKEKIKQAKEAVKENLKKFSDSVKSTFRHFKDTTKNIFDEKGSKRFRAPKEAATEKTRTAYSYSSYSQQEAPNQNQNCRRPSAQRDGGREKPSHSEEIRKNANSYTYKAKSDCRGTHSTRRVCSGMFECAGQEAISPVNKASPVRMNDFKQLIHWYLLNELETFHHWKELDQFISPFFPNGVFRHDQQLFADFVDDVKGYLKSIKEYRVEDGNLEKLDGCIYRHFGHVFALPFGPRSVYIKPCYYNSF</sequence>
<gene>
    <name type="primary">Ccpg1</name>
</gene>
<keyword id="KW-0025">Alternative splicing</keyword>
<keyword id="KW-0131">Cell cycle</keyword>
<keyword id="KW-0175">Coiled coil</keyword>
<keyword id="KW-0472">Membrane</keyword>
<keyword id="KW-0597">Phosphoprotein</keyword>
<keyword id="KW-1185">Reference proteome</keyword>
<keyword id="KW-0735">Signal-anchor</keyword>
<keyword id="KW-0812">Transmembrane</keyword>
<keyword id="KW-1133">Transmembrane helix</keyword>